<organism>
    <name type="scientific">Dichelobacter nodosus (strain VCS1703A)</name>
    <dbReference type="NCBI Taxonomy" id="246195"/>
    <lineage>
        <taxon>Bacteria</taxon>
        <taxon>Pseudomonadati</taxon>
        <taxon>Pseudomonadota</taxon>
        <taxon>Gammaproteobacteria</taxon>
        <taxon>Cardiobacteriales</taxon>
        <taxon>Cardiobacteriaceae</taxon>
        <taxon>Dichelobacter</taxon>
    </lineage>
</organism>
<dbReference type="EC" id="6.3.5.-" evidence="1"/>
<dbReference type="EMBL" id="CP000513">
    <property type="protein sequence ID" value="ABQ13742.1"/>
    <property type="molecule type" value="Genomic_DNA"/>
</dbReference>
<dbReference type="RefSeq" id="WP_012030692.1">
    <property type="nucleotide sequence ID" value="NC_009446.1"/>
</dbReference>
<dbReference type="SMR" id="A5EW27"/>
<dbReference type="STRING" id="246195.DNO_0349"/>
<dbReference type="KEGG" id="dno:DNO_0349"/>
<dbReference type="eggNOG" id="COG0064">
    <property type="taxonomic scope" value="Bacteria"/>
</dbReference>
<dbReference type="HOGENOM" id="CLU_019240_1_1_6"/>
<dbReference type="OrthoDB" id="9804078at2"/>
<dbReference type="Proteomes" id="UP000000248">
    <property type="component" value="Chromosome"/>
</dbReference>
<dbReference type="GO" id="GO:0050566">
    <property type="term" value="F:asparaginyl-tRNA synthase (glutamine-hydrolyzing) activity"/>
    <property type="evidence" value="ECO:0007669"/>
    <property type="project" value="RHEA"/>
</dbReference>
<dbReference type="GO" id="GO:0005524">
    <property type="term" value="F:ATP binding"/>
    <property type="evidence" value="ECO:0007669"/>
    <property type="project" value="UniProtKB-KW"/>
</dbReference>
<dbReference type="GO" id="GO:0050567">
    <property type="term" value="F:glutaminyl-tRNA synthase (glutamine-hydrolyzing) activity"/>
    <property type="evidence" value="ECO:0007669"/>
    <property type="project" value="UniProtKB-UniRule"/>
</dbReference>
<dbReference type="GO" id="GO:0070681">
    <property type="term" value="P:glutaminyl-tRNAGln biosynthesis via transamidation"/>
    <property type="evidence" value="ECO:0007669"/>
    <property type="project" value="TreeGrafter"/>
</dbReference>
<dbReference type="GO" id="GO:0006412">
    <property type="term" value="P:translation"/>
    <property type="evidence" value="ECO:0007669"/>
    <property type="project" value="UniProtKB-UniRule"/>
</dbReference>
<dbReference type="FunFam" id="1.10.10.410:FF:000001">
    <property type="entry name" value="Aspartyl/glutamyl-tRNA(Asn/Gln) amidotransferase subunit B"/>
    <property type="match status" value="1"/>
</dbReference>
<dbReference type="FunFam" id="1.10.150.380:FF:000001">
    <property type="entry name" value="Aspartyl/glutamyl-tRNA(Asn/Gln) amidotransferase subunit B"/>
    <property type="match status" value="1"/>
</dbReference>
<dbReference type="Gene3D" id="1.10.10.410">
    <property type="match status" value="1"/>
</dbReference>
<dbReference type="Gene3D" id="1.10.150.380">
    <property type="entry name" value="GatB domain, N-terminal subdomain"/>
    <property type="match status" value="1"/>
</dbReference>
<dbReference type="HAMAP" id="MF_00121">
    <property type="entry name" value="GatB"/>
    <property type="match status" value="1"/>
</dbReference>
<dbReference type="InterPro" id="IPR017959">
    <property type="entry name" value="Asn/Gln-tRNA_amidoTrfase_suB/E"/>
</dbReference>
<dbReference type="InterPro" id="IPR006075">
    <property type="entry name" value="Asn/Gln-tRNA_Trfase_suB/E_cat"/>
</dbReference>
<dbReference type="InterPro" id="IPR018027">
    <property type="entry name" value="Asn/Gln_amidotransferase"/>
</dbReference>
<dbReference type="InterPro" id="IPR003789">
    <property type="entry name" value="Asn/Gln_tRNA_amidoTrase-B-like"/>
</dbReference>
<dbReference type="InterPro" id="IPR004413">
    <property type="entry name" value="GatB"/>
</dbReference>
<dbReference type="InterPro" id="IPR042114">
    <property type="entry name" value="GatB_C_1"/>
</dbReference>
<dbReference type="InterPro" id="IPR023168">
    <property type="entry name" value="GatB_Yqey_C_2"/>
</dbReference>
<dbReference type="InterPro" id="IPR017958">
    <property type="entry name" value="Gln-tRNA_amidoTrfase_suB_CS"/>
</dbReference>
<dbReference type="InterPro" id="IPR014746">
    <property type="entry name" value="Gln_synth/guanido_kin_cat_dom"/>
</dbReference>
<dbReference type="NCBIfam" id="TIGR00133">
    <property type="entry name" value="gatB"/>
    <property type="match status" value="1"/>
</dbReference>
<dbReference type="NCBIfam" id="NF004012">
    <property type="entry name" value="PRK05477.1-2"/>
    <property type="match status" value="1"/>
</dbReference>
<dbReference type="NCBIfam" id="NF004014">
    <property type="entry name" value="PRK05477.1-4"/>
    <property type="match status" value="1"/>
</dbReference>
<dbReference type="PANTHER" id="PTHR11659">
    <property type="entry name" value="GLUTAMYL-TRNA GLN AMIDOTRANSFERASE SUBUNIT B MITOCHONDRIAL AND PROKARYOTIC PET112-RELATED"/>
    <property type="match status" value="1"/>
</dbReference>
<dbReference type="PANTHER" id="PTHR11659:SF0">
    <property type="entry name" value="GLUTAMYL-TRNA(GLN) AMIDOTRANSFERASE SUBUNIT B, MITOCHONDRIAL"/>
    <property type="match status" value="1"/>
</dbReference>
<dbReference type="Pfam" id="PF02934">
    <property type="entry name" value="GatB_N"/>
    <property type="match status" value="1"/>
</dbReference>
<dbReference type="Pfam" id="PF02637">
    <property type="entry name" value="GatB_Yqey"/>
    <property type="match status" value="1"/>
</dbReference>
<dbReference type="SMART" id="SM00845">
    <property type="entry name" value="GatB_Yqey"/>
    <property type="match status" value="1"/>
</dbReference>
<dbReference type="SUPFAM" id="SSF89095">
    <property type="entry name" value="GatB/YqeY motif"/>
    <property type="match status" value="1"/>
</dbReference>
<dbReference type="SUPFAM" id="SSF55931">
    <property type="entry name" value="Glutamine synthetase/guanido kinase"/>
    <property type="match status" value="1"/>
</dbReference>
<dbReference type="PROSITE" id="PS01234">
    <property type="entry name" value="GATB"/>
    <property type="match status" value="1"/>
</dbReference>
<protein>
    <recommendedName>
        <fullName evidence="1">Aspartyl/glutamyl-tRNA(Asn/Gln) amidotransferase subunit B</fullName>
        <shortName evidence="1">Asp/Glu-ADT subunit B</shortName>
        <ecNumber evidence="1">6.3.5.-</ecNumber>
    </recommendedName>
</protein>
<keyword id="KW-0067">ATP-binding</keyword>
<keyword id="KW-0436">Ligase</keyword>
<keyword id="KW-0547">Nucleotide-binding</keyword>
<keyword id="KW-0648">Protein biosynthesis</keyword>
<keyword id="KW-1185">Reference proteome</keyword>
<sequence length="478" mass="53339">MRYEPVIGLELHIQLNTHSKLFSPSSAAFGAEANTHVNEIDLAYPGVLPVLNEQALASAVLFGLALGSRIHSSAVFMRKNYFYPDSPKGYQISQLNDAVILGGQVSIDVDGATQTVRINRGQLEEDAGKSVHDIFSDRTGIDLNRAGVPLIELVSEPDMHSAAAAVAYMRKIHHLVRYLGISDGNMQEGSFRCDANVSIRPVGSKELNARVELKNINSFRFVAQAIQIEIERQSDILDAGGSVEQETRLFDPEKMQTRTMRSKENANDYRYFPDPDLLPLHLSAETIEHIRAQLPELPDARAQRYRKDYQLDDETIAFLVQTRMIADYFDAVVAKCHDAKLAANWISVELARLLNEHHLSFEQNPVSAEQFSQLLLKIHDDTISAQNGKKVLDYLWQHADADVDAVIDTQGLRQISDDQALKTWAAEVLAAYPKQVADYRGGQEKLLGFFVGQVMKKSRGKANPKTVNDIISQMLQAE</sequence>
<comment type="function">
    <text evidence="1">Allows the formation of correctly charged Asn-tRNA(Asn) or Gln-tRNA(Gln) through the transamidation of misacylated Asp-tRNA(Asn) or Glu-tRNA(Gln) in organisms which lack either or both of asparaginyl-tRNA or glutaminyl-tRNA synthetases. The reaction takes place in the presence of glutamine and ATP through an activated phospho-Asp-tRNA(Asn) or phospho-Glu-tRNA(Gln).</text>
</comment>
<comment type="catalytic activity">
    <reaction evidence="1">
        <text>L-glutamyl-tRNA(Gln) + L-glutamine + ATP + H2O = L-glutaminyl-tRNA(Gln) + L-glutamate + ADP + phosphate + H(+)</text>
        <dbReference type="Rhea" id="RHEA:17521"/>
        <dbReference type="Rhea" id="RHEA-COMP:9681"/>
        <dbReference type="Rhea" id="RHEA-COMP:9684"/>
        <dbReference type="ChEBI" id="CHEBI:15377"/>
        <dbReference type="ChEBI" id="CHEBI:15378"/>
        <dbReference type="ChEBI" id="CHEBI:29985"/>
        <dbReference type="ChEBI" id="CHEBI:30616"/>
        <dbReference type="ChEBI" id="CHEBI:43474"/>
        <dbReference type="ChEBI" id="CHEBI:58359"/>
        <dbReference type="ChEBI" id="CHEBI:78520"/>
        <dbReference type="ChEBI" id="CHEBI:78521"/>
        <dbReference type="ChEBI" id="CHEBI:456216"/>
    </reaction>
</comment>
<comment type="catalytic activity">
    <reaction evidence="1">
        <text>L-aspartyl-tRNA(Asn) + L-glutamine + ATP + H2O = L-asparaginyl-tRNA(Asn) + L-glutamate + ADP + phosphate + 2 H(+)</text>
        <dbReference type="Rhea" id="RHEA:14513"/>
        <dbReference type="Rhea" id="RHEA-COMP:9674"/>
        <dbReference type="Rhea" id="RHEA-COMP:9677"/>
        <dbReference type="ChEBI" id="CHEBI:15377"/>
        <dbReference type="ChEBI" id="CHEBI:15378"/>
        <dbReference type="ChEBI" id="CHEBI:29985"/>
        <dbReference type="ChEBI" id="CHEBI:30616"/>
        <dbReference type="ChEBI" id="CHEBI:43474"/>
        <dbReference type="ChEBI" id="CHEBI:58359"/>
        <dbReference type="ChEBI" id="CHEBI:78515"/>
        <dbReference type="ChEBI" id="CHEBI:78516"/>
        <dbReference type="ChEBI" id="CHEBI:456216"/>
    </reaction>
</comment>
<comment type="subunit">
    <text evidence="1">Heterotrimer of A, B and C subunits.</text>
</comment>
<comment type="similarity">
    <text evidence="1">Belongs to the GatB/GatE family. GatB subfamily.</text>
</comment>
<evidence type="ECO:0000255" key="1">
    <source>
        <dbReference type="HAMAP-Rule" id="MF_00121"/>
    </source>
</evidence>
<proteinExistence type="inferred from homology"/>
<feature type="chain" id="PRO_1000015964" description="Aspartyl/glutamyl-tRNA(Asn/Gln) amidotransferase subunit B">
    <location>
        <begin position="1"/>
        <end position="478"/>
    </location>
</feature>
<name>GATB_DICNV</name>
<accession>A5EW27</accession>
<reference key="1">
    <citation type="journal article" date="2007" name="Nat. Biotechnol.">
        <title>Genome sequence and identification of candidate vaccine antigens from the animal pathogen Dichelobacter nodosus.</title>
        <authorList>
            <person name="Myers G.S.A."/>
            <person name="Parker D."/>
            <person name="Al-Hasani K."/>
            <person name="Kennan R.M."/>
            <person name="Seemann T."/>
            <person name="Ren Q."/>
            <person name="Badger J.H."/>
            <person name="Selengut J.D."/>
            <person name="Deboy R.T."/>
            <person name="Tettelin H."/>
            <person name="Boyce J.D."/>
            <person name="McCarl V.P."/>
            <person name="Han X."/>
            <person name="Nelson W.C."/>
            <person name="Madupu R."/>
            <person name="Mohamoud Y."/>
            <person name="Holley T."/>
            <person name="Fedorova N."/>
            <person name="Khouri H."/>
            <person name="Bottomley S.P."/>
            <person name="Whittington R.J."/>
            <person name="Adler B."/>
            <person name="Songer J.G."/>
            <person name="Rood J.I."/>
            <person name="Paulsen I.T."/>
        </authorList>
    </citation>
    <scope>NUCLEOTIDE SEQUENCE [LARGE SCALE GENOMIC DNA]</scope>
    <source>
        <strain>VCS1703A</strain>
    </source>
</reference>
<gene>
    <name evidence="1" type="primary">gatB</name>
    <name type="ordered locus">DNO_0349</name>
</gene>